<sequence length="179" mass="19598">MSRIGKMPIRLADQAQVEVKENMINVTGPKGALSQALVDEVIVSVADGAVTVQRKDDSKRARAMHGLYRMLVSNMVEGVTKGFTRKLEMSGVGYRAELKGNLLALTLGYSHMIYFQPPAEIKIEVPDPTTVLVSGIDKALVGQIAAKIRSFRKPEPYRGKGIKYEGEVIRRKEGKAAGK</sequence>
<keyword id="KW-1185">Reference proteome</keyword>
<keyword id="KW-0687">Ribonucleoprotein</keyword>
<keyword id="KW-0689">Ribosomal protein</keyword>
<keyword id="KW-0694">RNA-binding</keyword>
<keyword id="KW-0699">rRNA-binding</keyword>
<evidence type="ECO:0000255" key="1">
    <source>
        <dbReference type="HAMAP-Rule" id="MF_01365"/>
    </source>
</evidence>
<evidence type="ECO:0000305" key="2"/>
<protein>
    <recommendedName>
        <fullName evidence="1">Large ribosomal subunit protein uL6</fullName>
    </recommendedName>
    <alternativeName>
        <fullName evidence="2">50S ribosomal protein L6</fullName>
    </alternativeName>
</protein>
<proteinExistence type="inferred from homology"/>
<organism>
    <name type="scientific">Chlorobaculum tepidum (strain ATCC 49652 / DSM 12025 / NBRC 103806 / TLS)</name>
    <name type="common">Chlorobium tepidum</name>
    <dbReference type="NCBI Taxonomy" id="194439"/>
    <lineage>
        <taxon>Bacteria</taxon>
        <taxon>Pseudomonadati</taxon>
        <taxon>Chlorobiota</taxon>
        <taxon>Chlorobiia</taxon>
        <taxon>Chlorobiales</taxon>
        <taxon>Chlorobiaceae</taxon>
        <taxon>Chlorobaculum</taxon>
    </lineage>
</organism>
<name>RL6_CHLTE</name>
<comment type="function">
    <text evidence="1">This protein binds to the 23S rRNA, and is important in its secondary structure. It is located near the subunit interface in the base of the L7/L12 stalk, and near the tRNA binding site of the peptidyltransferase center.</text>
</comment>
<comment type="subunit">
    <text evidence="1">Part of the 50S ribosomal subunit.</text>
</comment>
<comment type="similarity">
    <text evidence="1">Belongs to the universal ribosomal protein uL6 family.</text>
</comment>
<reference key="1">
    <citation type="journal article" date="2002" name="Proc. Natl. Acad. Sci. U.S.A.">
        <title>The complete genome sequence of Chlorobium tepidum TLS, a photosynthetic, anaerobic, green-sulfur bacterium.</title>
        <authorList>
            <person name="Eisen J.A."/>
            <person name="Nelson K.E."/>
            <person name="Paulsen I.T."/>
            <person name="Heidelberg J.F."/>
            <person name="Wu M."/>
            <person name="Dodson R.J."/>
            <person name="DeBoy R.T."/>
            <person name="Gwinn M.L."/>
            <person name="Nelson W.C."/>
            <person name="Haft D.H."/>
            <person name="Hickey E.K."/>
            <person name="Peterson J.D."/>
            <person name="Durkin A.S."/>
            <person name="Kolonay J.F."/>
            <person name="Yang F."/>
            <person name="Holt I.E."/>
            <person name="Umayam L.A."/>
            <person name="Mason T.M."/>
            <person name="Brenner M."/>
            <person name="Shea T.P."/>
            <person name="Parksey D.S."/>
            <person name="Nierman W.C."/>
            <person name="Feldblyum T.V."/>
            <person name="Hansen C.L."/>
            <person name="Craven M.B."/>
            <person name="Radune D."/>
            <person name="Vamathevan J.J."/>
            <person name="Khouri H.M."/>
            <person name="White O."/>
            <person name="Gruber T.M."/>
            <person name="Ketchum K.A."/>
            <person name="Venter J.C."/>
            <person name="Tettelin H."/>
            <person name="Bryant D.A."/>
            <person name="Fraser C.M."/>
        </authorList>
    </citation>
    <scope>NUCLEOTIDE SEQUENCE [LARGE SCALE GENOMIC DNA]</scope>
    <source>
        <strain>ATCC 49652 / DSM 12025 / NBRC 103806 / TLS</strain>
    </source>
</reference>
<gene>
    <name evidence="1" type="primary">rplF</name>
    <name type="ordered locus">CT2174</name>
</gene>
<dbReference type="EMBL" id="AE006470">
    <property type="protein sequence ID" value="AAM73390.1"/>
    <property type="molecule type" value="Genomic_DNA"/>
</dbReference>
<dbReference type="RefSeq" id="NP_663048.1">
    <property type="nucleotide sequence ID" value="NC_002932.3"/>
</dbReference>
<dbReference type="RefSeq" id="WP_010933827.1">
    <property type="nucleotide sequence ID" value="NC_002932.3"/>
</dbReference>
<dbReference type="SMR" id="Q8KAI6"/>
<dbReference type="STRING" id="194439.CT2174"/>
<dbReference type="EnsemblBacteria" id="AAM73390">
    <property type="protein sequence ID" value="AAM73390"/>
    <property type="gene ID" value="CT2174"/>
</dbReference>
<dbReference type="KEGG" id="cte:CT2174"/>
<dbReference type="PATRIC" id="fig|194439.7.peg.1973"/>
<dbReference type="eggNOG" id="COG0097">
    <property type="taxonomic scope" value="Bacteria"/>
</dbReference>
<dbReference type="HOGENOM" id="CLU_065464_1_2_10"/>
<dbReference type="OrthoDB" id="9805007at2"/>
<dbReference type="Proteomes" id="UP000001007">
    <property type="component" value="Chromosome"/>
</dbReference>
<dbReference type="GO" id="GO:0022625">
    <property type="term" value="C:cytosolic large ribosomal subunit"/>
    <property type="evidence" value="ECO:0007669"/>
    <property type="project" value="TreeGrafter"/>
</dbReference>
<dbReference type="GO" id="GO:0019843">
    <property type="term" value="F:rRNA binding"/>
    <property type="evidence" value="ECO:0007669"/>
    <property type="project" value="UniProtKB-UniRule"/>
</dbReference>
<dbReference type="GO" id="GO:0003735">
    <property type="term" value="F:structural constituent of ribosome"/>
    <property type="evidence" value="ECO:0007669"/>
    <property type="project" value="InterPro"/>
</dbReference>
<dbReference type="GO" id="GO:0002181">
    <property type="term" value="P:cytoplasmic translation"/>
    <property type="evidence" value="ECO:0007669"/>
    <property type="project" value="TreeGrafter"/>
</dbReference>
<dbReference type="FunFam" id="3.90.930.12:FF:000001">
    <property type="entry name" value="50S ribosomal protein L6"/>
    <property type="match status" value="1"/>
</dbReference>
<dbReference type="FunFam" id="3.90.930.12:FF:000002">
    <property type="entry name" value="50S ribosomal protein L6"/>
    <property type="match status" value="1"/>
</dbReference>
<dbReference type="Gene3D" id="3.90.930.12">
    <property type="entry name" value="Ribosomal protein L6, alpha-beta domain"/>
    <property type="match status" value="2"/>
</dbReference>
<dbReference type="HAMAP" id="MF_01365_B">
    <property type="entry name" value="Ribosomal_uL6_B"/>
    <property type="match status" value="1"/>
</dbReference>
<dbReference type="InterPro" id="IPR000702">
    <property type="entry name" value="Ribosomal_uL6-like"/>
</dbReference>
<dbReference type="InterPro" id="IPR036789">
    <property type="entry name" value="Ribosomal_uL6-like_a/b-dom_sf"/>
</dbReference>
<dbReference type="InterPro" id="IPR020040">
    <property type="entry name" value="Ribosomal_uL6_a/b-dom"/>
</dbReference>
<dbReference type="InterPro" id="IPR019906">
    <property type="entry name" value="Ribosomal_uL6_bac-type"/>
</dbReference>
<dbReference type="NCBIfam" id="TIGR03654">
    <property type="entry name" value="L6_bact"/>
    <property type="match status" value="1"/>
</dbReference>
<dbReference type="PANTHER" id="PTHR11655">
    <property type="entry name" value="60S/50S RIBOSOMAL PROTEIN L6/L9"/>
    <property type="match status" value="1"/>
</dbReference>
<dbReference type="PANTHER" id="PTHR11655:SF14">
    <property type="entry name" value="LARGE RIBOSOMAL SUBUNIT PROTEIN UL6M"/>
    <property type="match status" value="1"/>
</dbReference>
<dbReference type="Pfam" id="PF00347">
    <property type="entry name" value="Ribosomal_L6"/>
    <property type="match status" value="2"/>
</dbReference>
<dbReference type="PIRSF" id="PIRSF002162">
    <property type="entry name" value="Ribosomal_L6"/>
    <property type="match status" value="1"/>
</dbReference>
<dbReference type="PRINTS" id="PR00059">
    <property type="entry name" value="RIBOSOMALL6"/>
</dbReference>
<dbReference type="SUPFAM" id="SSF56053">
    <property type="entry name" value="Ribosomal protein L6"/>
    <property type="match status" value="2"/>
</dbReference>
<feature type="chain" id="PRO_0000265244" description="Large ribosomal subunit protein uL6">
    <location>
        <begin position="1"/>
        <end position="179"/>
    </location>
</feature>
<accession>Q8KAI6</accession>